<name>RL35_PSEA8</name>
<proteinExistence type="inferred from homology"/>
<accession>B7V190</accession>
<dbReference type="EMBL" id="FM209186">
    <property type="protein sequence ID" value="CAW27068.1"/>
    <property type="molecule type" value="Genomic_DNA"/>
</dbReference>
<dbReference type="RefSeq" id="WP_003090673.1">
    <property type="nucleotide sequence ID" value="NC_011770.1"/>
</dbReference>
<dbReference type="SMR" id="B7V190"/>
<dbReference type="GeneID" id="77220769"/>
<dbReference type="KEGG" id="pag:PLES_23411"/>
<dbReference type="HOGENOM" id="CLU_169643_1_1_6"/>
<dbReference type="GO" id="GO:0022625">
    <property type="term" value="C:cytosolic large ribosomal subunit"/>
    <property type="evidence" value="ECO:0007669"/>
    <property type="project" value="TreeGrafter"/>
</dbReference>
<dbReference type="GO" id="GO:0003735">
    <property type="term" value="F:structural constituent of ribosome"/>
    <property type="evidence" value="ECO:0007669"/>
    <property type="project" value="InterPro"/>
</dbReference>
<dbReference type="GO" id="GO:0006412">
    <property type="term" value="P:translation"/>
    <property type="evidence" value="ECO:0007669"/>
    <property type="project" value="UniProtKB-UniRule"/>
</dbReference>
<dbReference type="FunFam" id="4.10.410.60:FF:000001">
    <property type="entry name" value="50S ribosomal protein L35"/>
    <property type="match status" value="1"/>
</dbReference>
<dbReference type="Gene3D" id="4.10.410.60">
    <property type="match status" value="1"/>
</dbReference>
<dbReference type="HAMAP" id="MF_00514">
    <property type="entry name" value="Ribosomal_bL35"/>
    <property type="match status" value="1"/>
</dbReference>
<dbReference type="InterPro" id="IPR001706">
    <property type="entry name" value="Ribosomal_bL35"/>
</dbReference>
<dbReference type="InterPro" id="IPR021137">
    <property type="entry name" value="Ribosomal_bL35-like"/>
</dbReference>
<dbReference type="InterPro" id="IPR018265">
    <property type="entry name" value="Ribosomal_bL35_CS"/>
</dbReference>
<dbReference type="InterPro" id="IPR037229">
    <property type="entry name" value="Ribosomal_bL35_sf"/>
</dbReference>
<dbReference type="NCBIfam" id="TIGR00001">
    <property type="entry name" value="rpmI_bact"/>
    <property type="match status" value="1"/>
</dbReference>
<dbReference type="PANTHER" id="PTHR33343">
    <property type="entry name" value="54S RIBOSOMAL PROTEIN BL35M"/>
    <property type="match status" value="1"/>
</dbReference>
<dbReference type="PANTHER" id="PTHR33343:SF1">
    <property type="entry name" value="LARGE RIBOSOMAL SUBUNIT PROTEIN BL35M"/>
    <property type="match status" value="1"/>
</dbReference>
<dbReference type="Pfam" id="PF01632">
    <property type="entry name" value="Ribosomal_L35p"/>
    <property type="match status" value="1"/>
</dbReference>
<dbReference type="PRINTS" id="PR00064">
    <property type="entry name" value="RIBOSOMALL35"/>
</dbReference>
<dbReference type="SUPFAM" id="SSF143034">
    <property type="entry name" value="L35p-like"/>
    <property type="match status" value="1"/>
</dbReference>
<dbReference type="PROSITE" id="PS00936">
    <property type="entry name" value="RIBOSOMAL_L35"/>
    <property type="match status" value="1"/>
</dbReference>
<evidence type="ECO:0000255" key="1">
    <source>
        <dbReference type="HAMAP-Rule" id="MF_00514"/>
    </source>
</evidence>
<evidence type="ECO:0000256" key="2">
    <source>
        <dbReference type="SAM" id="MobiDB-lite"/>
    </source>
</evidence>
<evidence type="ECO:0000305" key="3"/>
<organism>
    <name type="scientific">Pseudomonas aeruginosa (strain LESB58)</name>
    <dbReference type="NCBI Taxonomy" id="557722"/>
    <lineage>
        <taxon>Bacteria</taxon>
        <taxon>Pseudomonadati</taxon>
        <taxon>Pseudomonadota</taxon>
        <taxon>Gammaproteobacteria</taxon>
        <taxon>Pseudomonadales</taxon>
        <taxon>Pseudomonadaceae</taxon>
        <taxon>Pseudomonas</taxon>
    </lineage>
</organism>
<comment type="similarity">
    <text evidence="1">Belongs to the bacterial ribosomal protein bL35 family.</text>
</comment>
<sequence length="64" mass="7364">MPKMKTKSGAAKRFKKTAGGLKHKHAFKSHILTKMTTKRKRQLRGTSMLNKSDVARVERSLRLR</sequence>
<gene>
    <name evidence="1" type="primary">rpmI</name>
    <name type="ordered locus">PLES_23411</name>
</gene>
<feature type="chain" id="PRO_1000127394" description="Large ribosomal subunit protein bL35">
    <location>
        <begin position="1"/>
        <end position="64"/>
    </location>
</feature>
<feature type="region of interest" description="Disordered" evidence="2">
    <location>
        <begin position="1"/>
        <end position="64"/>
    </location>
</feature>
<feature type="compositionally biased region" description="Basic residues" evidence="2">
    <location>
        <begin position="1"/>
        <end position="28"/>
    </location>
</feature>
<feature type="compositionally biased region" description="Basic and acidic residues" evidence="2">
    <location>
        <begin position="53"/>
        <end position="64"/>
    </location>
</feature>
<protein>
    <recommendedName>
        <fullName evidence="1">Large ribosomal subunit protein bL35</fullName>
    </recommendedName>
    <alternativeName>
        <fullName evidence="3">50S ribosomal protein L35</fullName>
    </alternativeName>
</protein>
<keyword id="KW-0687">Ribonucleoprotein</keyword>
<keyword id="KW-0689">Ribosomal protein</keyword>
<reference key="1">
    <citation type="journal article" date="2009" name="Genome Res.">
        <title>Newly introduced genomic prophage islands are critical determinants of in vivo competitiveness in the Liverpool epidemic strain of Pseudomonas aeruginosa.</title>
        <authorList>
            <person name="Winstanley C."/>
            <person name="Langille M.G.I."/>
            <person name="Fothergill J.L."/>
            <person name="Kukavica-Ibrulj I."/>
            <person name="Paradis-Bleau C."/>
            <person name="Sanschagrin F."/>
            <person name="Thomson N.R."/>
            <person name="Winsor G.L."/>
            <person name="Quail M.A."/>
            <person name="Lennard N."/>
            <person name="Bignell A."/>
            <person name="Clarke L."/>
            <person name="Seeger K."/>
            <person name="Saunders D."/>
            <person name="Harris D."/>
            <person name="Parkhill J."/>
            <person name="Hancock R.E.W."/>
            <person name="Brinkman F.S.L."/>
            <person name="Levesque R.C."/>
        </authorList>
    </citation>
    <scope>NUCLEOTIDE SEQUENCE [LARGE SCALE GENOMIC DNA]</scope>
    <source>
        <strain>LESB58</strain>
    </source>
</reference>